<accession>Q8N3Z0</accession>
<accession>A8K7B3</accession>
<accession>Q9BQP6</accession>
<feature type="signal peptide" evidence="2">
    <location>
        <begin position="1"/>
        <end position="16"/>
    </location>
</feature>
<feature type="chain" id="PRO_0000299358" description="Inactive serine protease 35">
    <location>
        <begin position="17"/>
        <end position="413"/>
    </location>
</feature>
<feature type="domain" description="Peptidase S1">
    <location>
        <begin position="124"/>
        <end position="408"/>
    </location>
</feature>
<feature type="region of interest" description="Disordered" evidence="3">
    <location>
        <begin position="191"/>
        <end position="250"/>
    </location>
</feature>
<feature type="compositionally biased region" description="Basic residues" evidence="3">
    <location>
        <begin position="191"/>
        <end position="207"/>
    </location>
</feature>
<feature type="compositionally biased region" description="Basic and acidic residues" evidence="3">
    <location>
        <begin position="208"/>
        <end position="228"/>
    </location>
</feature>
<feature type="compositionally biased region" description="Basic residues" evidence="3">
    <location>
        <begin position="229"/>
        <end position="238"/>
    </location>
</feature>
<feature type="glycosylation site" description="N-linked (GlcNAc...) asparagine" evidence="2">
    <location>
        <position position="90"/>
    </location>
</feature>
<feature type="disulfide bond" evidence="1">
    <location>
        <begin position="154"/>
        <end position="170"/>
    </location>
</feature>
<feature type="sequence variant" id="VAR_034810" description="In dbSNP:rs504593." evidence="4 5 6">
    <original>R</original>
    <variation>Q</variation>
    <location>
        <position position="224"/>
    </location>
</feature>
<protein>
    <recommendedName>
        <fullName>Inactive serine protease 35</fullName>
    </recommendedName>
</protein>
<sequence>MENMLLWLIFFTPGWTLIDGSEMEWDFMWHLRKVPRIVSERTFHLTSPAFEADAKMMVNTVCGIECQKELPTPSLSELEDYLSYETVFENGTRTLTRVKVQDLVLEPTQNITTKGVSVRRKRQVYGTDSRFSILDKRFLTNFPFSTAVKLSTGCSGILISPQHVLTAAHCVHDGKDYVKGSKKLRVGLLKMRNKSGGKKRRGSKRSRREASGGDQREGTREHLRERAKGGRRRKKSGRGQRIAEGRPSFQWTRVKNTHIPKGWARGGMGDATLDYDYALLELKRAHKKKYMELGISPTIKKMPGGMIHFSGFDNDRADQLVYRFCSVSDESNDLLYQYCDAESGSTGSGVYLRLKDPDKKNWKRKIIAVYSGHQWVDVHGVQKDYNVAVRITPLKYAQICLWIHGNDANCAYG</sequence>
<name>PRS35_HUMAN</name>
<evidence type="ECO:0000250" key="1"/>
<evidence type="ECO:0000255" key="2"/>
<evidence type="ECO:0000256" key="3">
    <source>
        <dbReference type="SAM" id="MobiDB-lite"/>
    </source>
</evidence>
<evidence type="ECO:0000269" key="4">
    <source>
    </source>
</evidence>
<evidence type="ECO:0000269" key="5">
    <source>
    </source>
</evidence>
<evidence type="ECO:0000269" key="6">
    <source>
    </source>
</evidence>
<evidence type="ECO:0000305" key="7"/>
<organism>
    <name type="scientific">Homo sapiens</name>
    <name type="common">Human</name>
    <dbReference type="NCBI Taxonomy" id="9606"/>
    <lineage>
        <taxon>Eukaryota</taxon>
        <taxon>Metazoa</taxon>
        <taxon>Chordata</taxon>
        <taxon>Craniata</taxon>
        <taxon>Vertebrata</taxon>
        <taxon>Euteleostomi</taxon>
        <taxon>Mammalia</taxon>
        <taxon>Eutheria</taxon>
        <taxon>Euarchontoglires</taxon>
        <taxon>Primates</taxon>
        <taxon>Haplorrhini</taxon>
        <taxon>Catarrhini</taxon>
        <taxon>Hominidae</taxon>
        <taxon>Homo</taxon>
    </lineage>
</organism>
<gene>
    <name type="primary">PRSS35</name>
    <name type="synonym">C6orf158</name>
    <name type="ORF">UNQ522/PRO1057</name>
</gene>
<dbReference type="EMBL" id="AY358661">
    <property type="protein sequence ID" value="AAQ89024.1"/>
    <property type="molecule type" value="mRNA"/>
</dbReference>
<dbReference type="EMBL" id="AK291928">
    <property type="protein sequence ID" value="BAF84617.1"/>
    <property type="molecule type" value="mRNA"/>
</dbReference>
<dbReference type="EMBL" id="AL121939">
    <property type="status" value="NOT_ANNOTATED_CDS"/>
    <property type="molecule type" value="Genomic_DNA"/>
</dbReference>
<dbReference type="EMBL" id="CH471051">
    <property type="protein sequence ID" value="EAW48663.1"/>
    <property type="molecule type" value="Genomic_DNA"/>
</dbReference>
<dbReference type="EMBL" id="BC037170">
    <property type="protein sequence ID" value="AAH37170.1"/>
    <property type="molecule type" value="mRNA"/>
</dbReference>
<dbReference type="CCDS" id="CCDS4999.1"/>
<dbReference type="RefSeq" id="NP_001163894.1">
    <property type="nucleotide sequence ID" value="NM_001170423.2"/>
</dbReference>
<dbReference type="RefSeq" id="NP_699193.2">
    <property type="nucleotide sequence ID" value="NM_153362.3"/>
</dbReference>
<dbReference type="BioGRID" id="127949">
    <property type="interactions" value="8"/>
</dbReference>
<dbReference type="FunCoup" id="Q8N3Z0">
    <property type="interactions" value="165"/>
</dbReference>
<dbReference type="IntAct" id="Q8N3Z0">
    <property type="interactions" value="32"/>
</dbReference>
<dbReference type="STRING" id="9606.ENSP00000358714"/>
<dbReference type="MEROPS" id="S01.994"/>
<dbReference type="GlyCosmos" id="Q8N3Z0">
    <property type="glycosylation" value="1 site, No reported glycans"/>
</dbReference>
<dbReference type="GlyGen" id="Q8N3Z0">
    <property type="glycosylation" value="4 sites, 1 N-linked glycan (1 site), 1 O-linked glycan (1 site)"/>
</dbReference>
<dbReference type="iPTMnet" id="Q8N3Z0"/>
<dbReference type="PhosphoSitePlus" id="Q8N3Z0"/>
<dbReference type="BioMuta" id="PRSS35"/>
<dbReference type="DMDM" id="158563845"/>
<dbReference type="jPOST" id="Q8N3Z0"/>
<dbReference type="MassIVE" id="Q8N3Z0"/>
<dbReference type="PaxDb" id="9606-ENSP00000358714"/>
<dbReference type="PeptideAtlas" id="Q8N3Z0"/>
<dbReference type="ProteomicsDB" id="71852"/>
<dbReference type="TopDownProteomics" id="Q8N3Z0"/>
<dbReference type="Antibodypedia" id="31685">
    <property type="antibodies" value="74 antibodies from 19 providers"/>
</dbReference>
<dbReference type="DNASU" id="167681"/>
<dbReference type="Ensembl" id="ENST00000369700.4">
    <property type="protein sequence ID" value="ENSP00000358714.3"/>
    <property type="gene ID" value="ENSG00000146250.7"/>
</dbReference>
<dbReference type="GeneID" id="167681"/>
<dbReference type="KEGG" id="hsa:167681"/>
<dbReference type="MANE-Select" id="ENST00000369700.4">
    <property type="protein sequence ID" value="ENSP00000358714.3"/>
    <property type="RefSeq nucleotide sequence ID" value="NM_153362.3"/>
    <property type="RefSeq protein sequence ID" value="NP_699193.2"/>
</dbReference>
<dbReference type="UCSC" id="uc003pjz.4">
    <property type="organism name" value="human"/>
</dbReference>
<dbReference type="AGR" id="HGNC:21387"/>
<dbReference type="CTD" id="167681"/>
<dbReference type="DisGeNET" id="167681"/>
<dbReference type="GeneCards" id="PRSS35"/>
<dbReference type="HGNC" id="HGNC:21387">
    <property type="gene designation" value="PRSS35"/>
</dbReference>
<dbReference type="HPA" id="ENSG00000146250">
    <property type="expression patterns" value="Tissue enhanced (ovary, retina)"/>
</dbReference>
<dbReference type="neXtProt" id="NX_Q8N3Z0"/>
<dbReference type="OpenTargets" id="ENSG00000146250"/>
<dbReference type="PharmGKB" id="PA134974089"/>
<dbReference type="VEuPathDB" id="HostDB:ENSG00000146250"/>
<dbReference type="eggNOG" id="ENOG502QV0K">
    <property type="taxonomic scope" value="Eukaryota"/>
</dbReference>
<dbReference type="GeneTree" id="ENSGT00390000000155"/>
<dbReference type="HOGENOM" id="CLU_055829_0_0_1"/>
<dbReference type="InParanoid" id="Q8N3Z0"/>
<dbReference type="OMA" id="MEQDFMW"/>
<dbReference type="OrthoDB" id="10037376at2759"/>
<dbReference type="PAN-GO" id="Q8N3Z0">
    <property type="GO annotations" value="0 GO annotations based on evolutionary models"/>
</dbReference>
<dbReference type="PhylomeDB" id="Q8N3Z0"/>
<dbReference type="TreeFam" id="TF329011"/>
<dbReference type="PathwayCommons" id="Q8N3Z0"/>
<dbReference type="SignaLink" id="Q8N3Z0"/>
<dbReference type="BioGRID-ORCS" id="167681">
    <property type="hits" value="18 hits in 1149 CRISPR screens"/>
</dbReference>
<dbReference type="GenomeRNAi" id="167681"/>
<dbReference type="Pharos" id="Q8N3Z0">
    <property type="development level" value="Tbio"/>
</dbReference>
<dbReference type="PRO" id="PR:Q8N3Z0"/>
<dbReference type="Proteomes" id="UP000005640">
    <property type="component" value="Chromosome 6"/>
</dbReference>
<dbReference type="RNAct" id="Q8N3Z0">
    <property type="molecule type" value="protein"/>
</dbReference>
<dbReference type="Bgee" id="ENSG00000146250">
    <property type="expression patterns" value="Expressed in tibia and 129 other cell types or tissues"/>
</dbReference>
<dbReference type="GO" id="GO:0005576">
    <property type="term" value="C:extracellular region"/>
    <property type="evidence" value="ECO:0007669"/>
    <property type="project" value="UniProtKB-SubCell"/>
</dbReference>
<dbReference type="Gene3D" id="2.40.10.10">
    <property type="entry name" value="Trypsin-like serine proteases"/>
    <property type="match status" value="1"/>
</dbReference>
<dbReference type="InterPro" id="IPR050966">
    <property type="entry name" value="Glutamyl_endopeptidase"/>
</dbReference>
<dbReference type="InterPro" id="IPR009003">
    <property type="entry name" value="Peptidase_S1_PA"/>
</dbReference>
<dbReference type="InterPro" id="IPR043504">
    <property type="entry name" value="Peptidase_S1_PA_chymotrypsin"/>
</dbReference>
<dbReference type="InterPro" id="IPR001254">
    <property type="entry name" value="Trypsin_dom"/>
</dbReference>
<dbReference type="InterPro" id="IPR018114">
    <property type="entry name" value="TRYPSIN_HIS"/>
</dbReference>
<dbReference type="PANTHER" id="PTHR15462:SF17">
    <property type="entry name" value="INACTIVE SERINE PROTEASE 35"/>
    <property type="match status" value="1"/>
</dbReference>
<dbReference type="PANTHER" id="PTHR15462">
    <property type="entry name" value="SERINE PROTEASE"/>
    <property type="match status" value="1"/>
</dbReference>
<dbReference type="Pfam" id="PF00089">
    <property type="entry name" value="Trypsin"/>
    <property type="match status" value="1"/>
</dbReference>
<dbReference type="SUPFAM" id="SSF50494">
    <property type="entry name" value="Trypsin-like serine proteases"/>
    <property type="match status" value="1"/>
</dbReference>
<dbReference type="PROSITE" id="PS00134">
    <property type="entry name" value="TRYPSIN_HIS"/>
    <property type="match status" value="1"/>
</dbReference>
<proteinExistence type="evidence at protein level"/>
<keyword id="KW-1015">Disulfide bond</keyword>
<keyword id="KW-0325">Glycoprotein</keyword>
<keyword id="KW-1267">Proteomics identification</keyword>
<keyword id="KW-1185">Reference proteome</keyword>
<keyword id="KW-0964">Secreted</keyword>
<keyword id="KW-0721">Serine protease homolog</keyword>
<keyword id="KW-0732">Signal</keyword>
<reference key="1">
    <citation type="journal article" date="2003" name="Genome Res.">
        <title>The secreted protein discovery initiative (SPDI), a large-scale effort to identify novel human secreted and transmembrane proteins: a bioinformatics assessment.</title>
        <authorList>
            <person name="Clark H.F."/>
            <person name="Gurney A.L."/>
            <person name="Abaya E."/>
            <person name="Baker K."/>
            <person name="Baldwin D.T."/>
            <person name="Brush J."/>
            <person name="Chen J."/>
            <person name="Chow B."/>
            <person name="Chui C."/>
            <person name="Crowley C."/>
            <person name="Currell B."/>
            <person name="Deuel B."/>
            <person name="Dowd P."/>
            <person name="Eaton D."/>
            <person name="Foster J.S."/>
            <person name="Grimaldi C."/>
            <person name="Gu Q."/>
            <person name="Hass P.E."/>
            <person name="Heldens S."/>
            <person name="Huang A."/>
            <person name="Kim H.S."/>
            <person name="Klimowski L."/>
            <person name="Jin Y."/>
            <person name="Johnson S."/>
            <person name="Lee J."/>
            <person name="Lewis L."/>
            <person name="Liao D."/>
            <person name="Mark M.R."/>
            <person name="Robbie E."/>
            <person name="Sanchez C."/>
            <person name="Schoenfeld J."/>
            <person name="Seshagiri S."/>
            <person name="Simmons L."/>
            <person name="Singh J."/>
            <person name="Smith V."/>
            <person name="Stinson J."/>
            <person name="Vagts A."/>
            <person name="Vandlen R.L."/>
            <person name="Watanabe C."/>
            <person name="Wieand D."/>
            <person name="Woods K."/>
            <person name="Xie M.-H."/>
            <person name="Yansura D.G."/>
            <person name="Yi S."/>
            <person name="Yu G."/>
            <person name="Yuan J."/>
            <person name="Zhang M."/>
            <person name="Zhang Z."/>
            <person name="Goddard A.D."/>
            <person name="Wood W.I."/>
            <person name="Godowski P.J."/>
            <person name="Gray A.M."/>
        </authorList>
    </citation>
    <scope>NUCLEOTIDE SEQUENCE [LARGE SCALE MRNA]</scope>
    <scope>VARIANT GLN-224</scope>
</reference>
<reference key="2">
    <citation type="journal article" date="2004" name="Nat. Genet.">
        <title>Complete sequencing and characterization of 21,243 full-length human cDNAs.</title>
        <authorList>
            <person name="Ota T."/>
            <person name="Suzuki Y."/>
            <person name="Nishikawa T."/>
            <person name="Otsuki T."/>
            <person name="Sugiyama T."/>
            <person name="Irie R."/>
            <person name="Wakamatsu A."/>
            <person name="Hayashi K."/>
            <person name="Sato H."/>
            <person name="Nagai K."/>
            <person name="Kimura K."/>
            <person name="Makita H."/>
            <person name="Sekine M."/>
            <person name="Obayashi M."/>
            <person name="Nishi T."/>
            <person name="Shibahara T."/>
            <person name="Tanaka T."/>
            <person name="Ishii S."/>
            <person name="Yamamoto J."/>
            <person name="Saito K."/>
            <person name="Kawai Y."/>
            <person name="Isono Y."/>
            <person name="Nakamura Y."/>
            <person name="Nagahari K."/>
            <person name="Murakami K."/>
            <person name="Yasuda T."/>
            <person name="Iwayanagi T."/>
            <person name="Wagatsuma M."/>
            <person name="Shiratori A."/>
            <person name="Sudo H."/>
            <person name="Hosoiri T."/>
            <person name="Kaku Y."/>
            <person name="Kodaira H."/>
            <person name="Kondo H."/>
            <person name="Sugawara M."/>
            <person name="Takahashi M."/>
            <person name="Kanda K."/>
            <person name="Yokoi T."/>
            <person name="Furuya T."/>
            <person name="Kikkawa E."/>
            <person name="Omura Y."/>
            <person name="Abe K."/>
            <person name="Kamihara K."/>
            <person name="Katsuta N."/>
            <person name="Sato K."/>
            <person name="Tanikawa M."/>
            <person name="Yamazaki M."/>
            <person name="Ninomiya K."/>
            <person name="Ishibashi T."/>
            <person name="Yamashita H."/>
            <person name="Murakawa K."/>
            <person name="Fujimori K."/>
            <person name="Tanai H."/>
            <person name="Kimata M."/>
            <person name="Watanabe M."/>
            <person name="Hiraoka S."/>
            <person name="Chiba Y."/>
            <person name="Ishida S."/>
            <person name="Ono Y."/>
            <person name="Takiguchi S."/>
            <person name="Watanabe S."/>
            <person name="Yosida M."/>
            <person name="Hotuta T."/>
            <person name="Kusano J."/>
            <person name="Kanehori K."/>
            <person name="Takahashi-Fujii A."/>
            <person name="Hara H."/>
            <person name="Tanase T.-O."/>
            <person name="Nomura Y."/>
            <person name="Togiya S."/>
            <person name="Komai F."/>
            <person name="Hara R."/>
            <person name="Takeuchi K."/>
            <person name="Arita M."/>
            <person name="Imose N."/>
            <person name="Musashino K."/>
            <person name="Yuuki H."/>
            <person name="Oshima A."/>
            <person name="Sasaki N."/>
            <person name="Aotsuka S."/>
            <person name="Yoshikawa Y."/>
            <person name="Matsunawa H."/>
            <person name="Ichihara T."/>
            <person name="Shiohata N."/>
            <person name="Sano S."/>
            <person name="Moriya S."/>
            <person name="Momiyama H."/>
            <person name="Satoh N."/>
            <person name="Takami S."/>
            <person name="Terashima Y."/>
            <person name="Suzuki O."/>
            <person name="Nakagawa S."/>
            <person name="Senoh A."/>
            <person name="Mizoguchi H."/>
            <person name="Goto Y."/>
            <person name="Shimizu F."/>
            <person name="Wakebe H."/>
            <person name="Hishigaki H."/>
            <person name="Watanabe T."/>
            <person name="Sugiyama A."/>
            <person name="Takemoto M."/>
            <person name="Kawakami B."/>
            <person name="Yamazaki M."/>
            <person name="Watanabe K."/>
            <person name="Kumagai A."/>
            <person name="Itakura S."/>
            <person name="Fukuzumi Y."/>
            <person name="Fujimori Y."/>
            <person name="Komiyama M."/>
            <person name="Tashiro H."/>
            <person name="Tanigami A."/>
            <person name="Fujiwara T."/>
            <person name="Ono T."/>
            <person name="Yamada K."/>
            <person name="Fujii Y."/>
            <person name="Ozaki K."/>
            <person name="Hirao M."/>
            <person name="Ohmori Y."/>
            <person name="Kawabata A."/>
            <person name="Hikiji T."/>
            <person name="Kobatake N."/>
            <person name="Inagaki H."/>
            <person name="Ikema Y."/>
            <person name="Okamoto S."/>
            <person name="Okitani R."/>
            <person name="Kawakami T."/>
            <person name="Noguchi S."/>
            <person name="Itoh T."/>
            <person name="Shigeta K."/>
            <person name="Senba T."/>
            <person name="Matsumura K."/>
            <person name="Nakajima Y."/>
            <person name="Mizuno T."/>
            <person name="Morinaga M."/>
            <person name="Sasaki M."/>
            <person name="Togashi T."/>
            <person name="Oyama M."/>
            <person name="Hata H."/>
            <person name="Watanabe M."/>
            <person name="Komatsu T."/>
            <person name="Mizushima-Sugano J."/>
            <person name="Satoh T."/>
            <person name="Shirai Y."/>
            <person name="Takahashi Y."/>
            <person name="Nakagawa K."/>
            <person name="Okumura K."/>
            <person name="Nagase T."/>
            <person name="Nomura N."/>
            <person name="Kikuchi H."/>
            <person name="Masuho Y."/>
            <person name="Yamashita R."/>
            <person name="Nakai K."/>
            <person name="Yada T."/>
            <person name="Nakamura Y."/>
            <person name="Ohara O."/>
            <person name="Isogai T."/>
            <person name="Sugano S."/>
        </authorList>
    </citation>
    <scope>NUCLEOTIDE SEQUENCE [LARGE SCALE MRNA]</scope>
    <scope>VARIANT GLN-224</scope>
</reference>
<reference key="3">
    <citation type="journal article" date="2003" name="Nature">
        <title>The DNA sequence and analysis of human chromosome 6.</title>
        <authorList>
            <person name="Mungall A.J."/>
            <person name="Palmer S.A."/>
            <person name="Sims S.K."/>
            <person name="Edwards C.A."/>
            <person name="Ashurst J.L."/>
            <person name="Wilming L."/>
            <person name="Jones M.C."/>
            <person name="Horton R."/>
            <person name="Hunt S.E."/>
            <person name="Scott C.E."/>
            <person name="Gilbert J.G.R."/>
            <person name="Clamp M.E."/>
            <person name="Bethel G."/>
            <person name="Milne S."/>
            <person name="Ainscough R."/>
            <person name="Almeida J.P."/>
            <person name="Ambrose K.D."/>
            <person name="Andrews T.D."/>
            <person name="Ashwell R.I.S."/>
            <person name="Babbage A.K."/>
            <person name="Bagguley C.L."/>
            <person name="Bailey J."/>
            <person name="Banerjee R."/>
            <person name="Barker D.J."/>
            <person name="Barlow K.F."/>
            <person name="Bates K."/>
            <person name="Beare D.M."/>
            <person name="Beasley H."/>
            <person name="Beasley O."/>
            <person name="Bird C.P."/>
            <person name="Blakey S.E."/>
            <person name="Bray-Allen S."/>
            <person name="Brook J."/>
            <person name="Brown A.J."/>
            <person name="Brown J.Y."/>
            <person name="Burford D.C."/>
            <person name="Burrill W."/>
            <person name="Burton J."/>
            <person name="Carder C."/>
            <person name="Carter N.P."/>
            <person name="Chapman J.C."/>
            <person name="Clark S.Y."/>
            <person name="Clark G."/>
            <person name="Clee C.M."/>
            <person name="Clegg S."/>
            <person name="Cobley V."/>
            <person name="Collier R.E."/>
            <person name="Collins J.E."/>
            <person name="Colman L.K."/>
            <person name="Corby N.R."/>
            <person name="Coville G.J."/>
            <person name="Culley K.M."/>
            <person name="Dhami P."/>
            <person name="Davies J."/>
            <person name="Dunn M."/>
            <person name="Earthrowl M.E."/>
            <person name="Ellington A.E."/>
            <person name="Evans K.A."/>
            <person name="Faulkner L."/>
            <person name="Francis M.D."/>
            <person name="Frankish A."/>
            <person name="Frankland J."/>
            <person name="French L."/>
            <person name="Garner P."/>
            <person name="Garnett J."/>
            <person name="Ghori M.J."/>
            <person name="Gilby L.M."/>
            <person name="Gillson C.J."/>
            <person name="Glithero R.J."/>
            <person name="Grafham D.V."/>
            <person name="Grant M."/>
            <person name="Gribble S."/>
            <person name="Griffiths C."/>
            <person name="Griffiths M.N.D."/>
            <person name="Hall R."/>
            <person name="Halls K.S."/>
            <person name="Hammond S."/>
            <person name="Harley J.L."/>
            <person name="Hart E.A."/>
            <person name="Heath P.D."/>
            <person name="Heathcott R."/>
            <person name="Holmes S.J."/>
            <person name="Howden P.J."/>
            <person name="Howe K.L."/>
            <person name="Howell G.R."/>
            <person name="Huckle E."/>
            <person name="Humphray S.J."/>
            <person name="Humphries M.D."/>
            <person name="Hunt A.R."/>
            <person name="Johnson C.M."/>
            <person name="Joy A.A."/>
            <person name="Kay M."/>
            <person name="Keenan S.J."/>
            <person name="Kimberley A.M."/>
            <person name="King A."/>
            <person name="Laird G.K."/>
            <person name="Langford C."/>
            <person name="Lawlor S."/>
            <person name="Leongamornlert D.A."/>
            <person name="Leversha M."/>
            <person name="Lloyd C.R."/>
            <person name="Lloyd D.M."/>
            <person name="Loveland J.E."/>
            <person name="Lovell J."/>
            <person name="Martin S."/>
            <person name="Mashreghi-Mohammadi M."/>
            <person name="Maslen G.L."/>
            <person name="Matthews L."/>
            <person name="McCann O.T."/>
            <person name="McLaren S.J."/>
            <person name="McLay K."/>
            <person name="McMurray A."/>
            <person name="Moore M.J.F."/>
            <person name="Mullikin J.C."/>
            <person name="Niblett D."/>
            <person name="Nickerson T."/>
            <person name="Novik K.L."/>
            <person name="Oliver K."/>
            <person name="Overton-Larty E.K."/>
            <person name="Parker A."/>
            <person name="Patel R."/>
            <person name="Pearce A.V."/>
            <person name="Peck A.I."/>
            <person name="Phillimore B.J.C.T."/>
            <person name="Phillips S."/>
            <person name="Plumb R.W."/>
            <person name="Porter K.M."/>
            <person name="Ramsey Y."/>
            <person name="Ranby S.A."/>
            <person name="Rice C.M."/>
            <person name="Ross M.T."/>
            <person name="Searle S.M."/>
            <person name="Sehra H.K."/>
            <person name="Sheridan E."/>
            <person name="Skuce C.D."/>
            <person name="Smith S."/>
            <person name="Smith M."/>
            <person name="Spraggon L."/>
            <person name="Squares S.L."/>
            <person name="Steward C.A."/>
            <person name="Sycamore N."/>
            <person name="Tamlyn-Hall G."/>
            <person name="Tester J."/>
            <person name="Theaker A.J."/>
            <person name="Thomas D.W."/>
            <person name="Thorpe A."/>
            <person name="Tracey A."/>
            <person name="Tromans A."/>
            <person name="Tubby B."/>
            <person name="Wall M."/>
            <person name="Wallis J.M."/>
            <person name="West A.P."/>
            <person name="White S.S."/>
            <person name="Whitehead S.L."/>
            <person name="Whittaker H."/>
            <person name="Wild A."/>
            <person name="Willey D.J."/>
            <person name="Wilmer T.E."/>
            <person name="Wood J.M."/>
            <person name="Wray P.W."/>
            <person name="Wyatt J.C."/>
            <person name="Young L."/>
            <person name="Younger R.M."/>
            <person name="Bentley D.R."/>
            <person name="Coulson A."/>
            <person name="Durbin R.M."/>
            <person name="Hubbard T."/>
            <person name="Sulston J.E."/>
            <person name="Dunham I."/>
            <person name="Rogers J."/>
            <person name="Beck S."/>
        </authorList>
    </citation>
    <scope>NUCLEOTIDE SEQUENCE [LARGE SCALE GENOMIC DNA]</scope>
</reference>
<reference key="4">
    <citation type="submission" date="2006-12" db="EMBL/GenBank/DDBJ databases">
        <authorList>
            <person name="Mural R.J."/>
            <person name="Istrail S."/>
            <person name="Sutton G.G."/>
            <person name="Florea L."/>
            <person name="Halpern A.L."/>
            <person name="Mobarry C.M."/>
            <person name="Lippert R."/>
            <person name="Walenz B."/>
            <person name="Shatkay H."/>
            <person name="Dew I."/>
            <person name="Miller J.R."/>
            <person name="Flanigan M.J."/>
            <person name="Edwards N.J."/>
            <person name="Bolanos R."/>
            <person name="Fasulo D."/>
            <person name="Halldorsson B.V."/>
            <person name="Hannenhalli S."/>
            <person name="Turner R."/>
            <person name="Yooseph S."/>
            <person name="Lu F."/>
            <person name="Nusskern D.R."/>
            <person name="Shue B.C."/>
            <person name="Zheng X.H."/>
            <person name="Zhong F."/>
            <person name="Delcher A.L."/>
            <person name="Huson D.H."/>
            <person name="Kravitz S.A."/>
            <person name="Mouchard L."/>
            <person name="Reinert K."/>
            <person name="Remington K.A."/>
            <person name="Clark A.G."/>
            <person name="Waterman M.S."/>
            <person name="Eichler E.E."/>
            <person name="Adams M.D."/>
            <person name="Hunkapiller M.W."/>
            <person name="Myers E.W."/>
            <person name="Venter J.C."/>
        </authorList>
    </citation>
    <scope>NUCLEOTIDE SEQUENCE [LARGE SCALE GENOMIC DNA]</scope>
</reference>
<reference key="5">
    <citation type="journal article" date="2004" name="Genome Res.">
        <title>The status, quality, and expansion of the NIH full-length cDNA project: the Mammalian Gene Collection (MGC).</title>
        <authorList>
            <consortium name="The MGC Project Team"/>
        </authorList>
    </citation>
    <scope>NUCLEOTIDE SEQUENCE [LARGE SCALE MRNA]</scope>
    <scope>VARIANT GLN-224</scope>
    <source>
        <tissue>Brain</tissue>
    </source>
</reference>
<comment type="interaction">
    <interactant intactId="EBI-20628340">
        <id>Q8N3Z0</id>
    </interactant>
    <interactant intactId="EBI-347528">
        <id>Q07021</id>
        <label>C1QBP</label>
    </interactant>
    <organismsDiffer>false</organismsDiffer>
    <experiments>4</experiments>
</comment>
<comment type="subcellular location">
    <subcellularLocation>
        <location evidence="7">Secreted</location>
    </subcellularLocation>
</comment>
<comment type="similarity">
    <text evidence="7">Belongs to the peptidase S1 family.</text>
</comment>
<comment type="caution">
    <text evidence="7">Although related to peptidase S1 family, lacks the conserved active Ser residue in position 346 which is replaced by a Thr, suggesting that it has no protease activity.</text>
</comment>